<accession>Q9P4P9</accession>
<accession>C8VBA3</accession>
<accession>Q5AWA0</accession>
<evidence type="ECO:0000250" key="1"/>
<evidence type="ECO:0000255" key="2"/>
<evidence type="ECO:0000305" key="3"/>
<keyword id="KW-0028">Amino-acid biosynthesis</keyword>
<keyword id="KW-0315">Glutamine amidotransferase</keyword>
<keyword id="KW-0368">Histidine biosynthesis</keyword>
<keyword id="KW-0378">Hydrolase</keyword>
<keyword id="KW-0456">Lyase</keyword>
<keyword id="KW-0511">Multifunctional enzyme</keyword>
<keyword id="KW-1185">Reference proteome</keyword>
<sequence>MPTVHLLDYVAGNVRSLVNAINKVGYEVEWVRSPSDLKDVEKLILPGVGHFGHCLSQLSSGGYLQPIREHIASGKPFMGICVGLQSLFESSEEDPNIPGLGTIPARLRKFDAKTKSVPHIGWNSATDTRIDSTGGQTFYGLSPSSKYYYVHSYAAPYEPGILEKDGWLVATASYGEEKFIGAIARDNIFATQFHPEKSGQAGLRTLRAFLDGAQLHSVTLEDSILTGEKNGLTRRIIACLDVRTNDVGDLVVTKGDQYDVREKDGADAGGQVRNLGKPVDMAKKYYEQGADEVTFLNITSFRNCPLADLPMLEILRRTSETVFVPLTIGGGIRDTVDTDGTHIPALDVASMYFKSGADKVSIGSDAVVAAEDYYAAGKVLSGKTAIETISKAYGNQAVVVSVDPKRVYVSQPEDTKHRTIETKFPNAAGQNFCWYQCTIKGGRETRDLDVCQLVQAVEAMGAGEILLNCIDKDGSNSGFDLELINHVKAAVKIPVIASSGAGMPKHFEEVFDQTTTDAALGAGMFHRGEYTVGEVKQYLEDRGFLVRRFEPDV</sequence>
<proteinExistence type="inferred from homology"/>
<dbReference type="EC" id="4.3.2.10"/>
<dbReference type="EC" id="3.5.1.2"/>
<dbReference type="EMBL" id="AF159463">
    <property type="protein sequence ID" value="AAF80376.1"/>
    <property type="molecule type" value="Genomic_DNA"/>
</dbReference>
<dbReference type="EMBL" id="AACD01000129">
    <property type="protein sequence ID" value="EAA62010.1"/>
    <property type="molecule type" value="Genomic_DNA"/>
</dbReference>
<dbReference type="EMBL" id="BN001304">
    <property type="protein sequence ID" value="CBF79365.1"/>
    <property type="molecule type" value="Genomic_DNA"/>
</dbReference>
<dbReference type="RefSeq" id="XP_680699.1">
    <property type="nucleotide sequence ID" value="XM_675607.1"/>
</dbReference>
<dbReference type="SMR" id="Q9P4P9"/>
<dbReference type="FunCoup" id="Q9P4P9">
    <property type="interactions" value="270"/>
</dbReference>
<dbReference type="STRING" id="227321.Q9P4P9"/>
<dbReference type="EnsemblFungi" id="CBF79365">
    <property type="protein sequence ID" value="CBF79365"/>
    <property type="gene ID" value="ANIA_07430"/>
</dbReference>
<dbReference type="KEGG" id="ani:ANIA_07430"/>
<dbReference type="VEuPathDB" id="FungiDB:AN7430"/>
<dbReference type="eggNOG" id="KOG0623">
    <property type="taxonomic scope" value="Eukaryota"/>
</dbReference>
<dbReference type="HOGENOM" id="CLU_037550_0_0_1"/>
<dbReference type="InParanoid" id="Q9P4P9"/>
<dbReference type="OMA" id="GNYGHFV"/>
<dbReference type="OrthoDB" id="10254903at2759"/>
<dbReference type="UniPathway" id="UPA00031">
    <property type="reaction ID" value="UER00010"/>
</dbReference>
<dbReference type="Proteomes" id="UP000000560">
    <property type="component" value="Chromosome IV"/>
</dbReference>
<dbReference type="GO" id="GO:0004359">
    <property type="term" value="F:glutaminase activity"/>
    <property type="evidence" value="ECO:0007669"/>
    <property type="project" value="UniProtKB-EC"/>
</dbReference>
<dbReference type="GO" id="GO:0000107">
    <property type="term" value="F:imidazoleglycerol-phosphate synthase activity"/>
    <property type="evidence" value="ECO:0000318"/>
    <property type="project" value="GO_Central"/>
</dbReference>
<dbReference type="GO" id="GO:0016829">
    <property type="term" value="F:lyase activity"/>
    <property type="evidence" value="ECO:0007669"/>
    <property type="project" value="UniProtKB-KW"/>
</dbReference>
<dbReference type="GO" id="GO:0000105">
    <property type="term" value="P:L-histidine biosynthetic process"/>
    <property type="evidence" value="ECO:0007669"/>
    <property type="project" value="UniProtKB-UniPathway"/>
</dbReference>
<dbReference type="CDD" id="cd01748">
    <property type="entry name" value="GATase1_IGP_Synthase"/>
    <property type="match status" value="1"/>
</dbReference>
<dbReference type="CDD" id="cd04731">
    <property type="entry name" value="HisF"/>
    <property type="match status" value="1"/>
</dbReference>
<dbReference type="FunFam" id="3.20.20.70:FF:000094">
    <property type="entry name" value="Imidazole glycerol phosphate synthase hisHF"/>
    <property type="match status" value="1"/>
</dbReference>
<dbReference type="FunFam" id="3.40.50.880:FF:000039">
    <property type="entry name" value="Imidazole glycerol phosphate synthase hisHF"/>
    <property type="match status" value="1"/>
</dbReference>
<dbReference type="Gene3D" id="3.40.50.880">
    <property type="match status" value="1"/>
</dbReference>
<dbReference type="Gene3D" id="3.20.20.70">
    <property type="entry name" value="Aldolase class I"/>
    <property type="match status" value="1"/>
</dbReference>
<dbReference type="HAMAP" id="MF_00278">
    <property type="entry name" value="HisH"/>
    <property type="match status" value="1"/>
</dbReference>
<dbReference type="InterPro" id="IPR013785">
    <property type="entry name" value="Aldolase_TIM"/>
</dbReference>
<dbReference type="InterPro" id="IPR029062">
    <property type="entry name" value="Class_I_gatase-like"/>
</dbReference>
<dbReference type="InterPro" id="IPR017926">
    <property type="entry name" value="GATASE"/>
</dbReference>
<dbReference type="InterPro" id="IPR006062">
    <property type="entry name" value="His_biosynth"/>
</dbReference>
<dbReference type="InterPro" id="IPR004651">
    <property type="entry name" value="HisF"/>
</dbReference>
<dbReference type="InterPro" id="IPR050064">
    <property type="entry name" value="IGPS_HisA/HisF"/>
</dbReference>
<dbReference type="InterPro" id="IPR014640">
    <property type="entry name" value="IGPS_HisHF"/>
</dbReference>
<dbReference type="InterPro" id="IPR010139">
    <property type="entry name" value="Imidazole-glycPsynth_HisH"/>
</dbReference>
<dbReference type="InterPro" id="IPR011060">
    <property type="entry name" value="RibuloseP-bd_barrel"/>
</dbReference>
<dbReference type="NCBIfam" id="TIGR00735">
    <property type="entry name" value="hisF"/>
    <property type="match status" value="1"/>
</dbReference>
<dbReference type="NCBIfam" id="TIGR01855">
    <property type="entry name" value="IMP_synth_hisH"/>
    <property type="match status" value="1"/>
</dbReference>
<dbReference type="PANTHER" id="PTHR21235:SF2">
    <property type="entry name" value="IMIDAZOLE GLYCEROL PHOSPHATE SYNTHASE HISHF"/>
    <property type="match status" value="1"/>
</dbReference>
<dbReference type="PANTHER" id="PTHR21235">
    <property type="entry name" value="IMIDAZOLE GLYCEROL PHOSPHATE SYNTHASE SUBUNIT HISF/H IGP SYNTHASE SUBUNIT HISF/H"/>
    <property type="match status" value="1"/>
</dbReference>
<dbReference type="Pfam" id="PF00117">
    <property type="entry name" value="GATase"/>
    <property type="match status" value="1"/>
</dbReference>
<dbReference type="Pfam" id="PF00977">
    <property type="entry name" value="His_biosynth"/>
    <property type="match status" value="1"/>
</dbReference>
<dbReference type="PIRSF" id="PIRSF036936">
    <property type="entry name" value="IGPS_HisHF"/>
    <property type="match status" value="1"/>
</dbReference>
<dbReference type="SUPFAM" id="SSF52317">
    <property type="entry name" value="Class I glutamine amidotransferase-like"/>
    <property type="match status" value="1"/>
</dbReference>
<dbReference type="SUPFAM" id="SSF51366">
    <property type="entry name" value="Ribulose-phoshate binding barrel"/>
    <property type="match status" value="1"/>
</dbReference>
<dbReference type="PROSITE" id="PS51273">
    <property type="entry name" value="GATASE_TYPE_1"/>
    <property type="match status" value="1"/>
</dbReference>
<protein>
    <recommendedName>
        <fullName>Imidazole glycerol phosphate synthase hisHF</fullName>
        <shortName>IGP synthase</shortName>
        <shortName>IGPS</shortName>
        <shortName>ImGP synthase</shortName>
        <ecNumber>4.3.2.10</ecNumber>
    </recommendedName>
    <domain>
        <recommendedName>
            <fullName>Glutaminase</fullName>
            <ecNumber>3.5.1.2</ecNumber>
        </recommendedName>
    </domain>
    <domain>
        <recommendedName>
            <fullName>Cyclase</fullName>
        </recommendedName>
    </domain>
</protein>
<comment type="function">
    <text evidence="1">IGPS catalyzes the conversion of PRFAR and glutamine to IGP, AICAR and glutamate. The glutaminase domain produces the ammonia necessary for the cyclase domain to produce IGP and AICAR from PRFAR. The ammonia is channeled to the active site of the cyclase domain.</text>
</comment>
<comment type="catalytic activity">
    <reaction>
        <text>5-[(5-phospho-1-deoxy-D-ribulos-1-ylimino)methylamino]-1-(5-phospho-beta-D-ribosyl)imidazole-4-carboxamide + L-glutamine = D-erythro-1-(imidazol-4-yl)glycerol 3-phosphate + 5-amino-1-(5-phospho-beta-D-ribosyl)imidazole-4-carboxamide + L-glutamate + H(+)</text>
        <dbReference type="Rhea" id="RHEA:24793"/>
        <dbReference type="ChEBI" id="CHEBI:15378"/>
        <dbReference type="ChEBI" id="CHEBI:29985"/>
        <dbReference type="ChEBI" id="CHEBI:58278"/>
        <dbReference type="ChEBI" id="CHEBI:58359"/>
        <dbReference type="ChEBI" id="CHEBI:58475"/>
        <dbReference type="ChEBI" id="CHEBI:58525"/>
        <dbReference type="EC" id="4.3.2.10"/>
    </reaction>
</comment>
<comment type="catalytic activity">
    <reaction>
        <text>L-glutamine + H2O = L-glutamate + NH4(+)</text>
        <dbReference type="Rhea" id="RHEA:15889"/>
        <dbReference type="ChEBI" id="CHEBI:15377"/>
        <dbReference type="ChEBI" id="CHEBI:28938"/>
        <dbReference type="ChEBI" id="CHEBI:29985"/>
        <dbReference type="ChEBI" id="CHEBI:58359"/>
        <dbReference type="EC" id="3.5.1.2"/>
    </reaction>
</comment>
<comment type="pathway">
    <text>Amino-acid biosynthesis; L-histidine biosynthesis; L-histidine from 5-phospho-alpha-D-ribose 1-diphosphate: step 5/9.</text>
</comment>
<comment type="similarity">
    <text evidence="3">In the C-terminal section; belongs to the HisA/HisF family.</text>
</comment>
<name>HIS5_EMENI</name>
<feature type="chain" id="PRO_0000152474" description="Imidazole glycerol phosphate synthase hisHF">
    <location>
        <begin position="1"/>
        <end position="553"/>
    </location>
</feature>
<feature type="domain" description="Glutamine amidotransferase type-1">
    <location>
        <begin position="3"/>
        <end position="223"/>
    </location>
</feature>
<feature type="region of interest" description="Cyclase">
    <location>
        <begin position="232"/>
        <end position="553"/>
    </location>
</feature>
<feature type="active site" description="For GATase activity" evidence="1">
    <location>
        <position position="81"/>
    </location>
</feature>
<feature type="active site" description="For GATase activity" evidence="1">
    <location>
        <position position="194"/>
    </location>
</feature>
<feature type="active site" description="For GATase activity" evidence="1">
    <location>
        <position position="196"/>
    </location>
</feature>
<feature type="active site" evidence="2">
    <location>
        <position position="241"/>
    </location>
</feature>
<feature type="active site" evidence="2">
    <location>
        <position position="403"/>
    </location>
</feature>
<feature type="sequence conflict" description="In Ref. 1; AAF80376." evidence="3" ref="1">
    <original>TAS</original>
    <variation>RRV</variation>
    <location>
        <begin position="171"/>
        <end position="173"/>
    </location>
</feature>
<feature type="sequence conflict" description="In Ref. 1; AAF80376." evidence="3" ref="1">
    <original>AGLRTLRAFLDGAQLHSVTLE</original>
    <variation>GRPTHPSRFLGRSSAPFCHIR</variation>
    <location>
        <begin position="201"/>
        <end position="221"/>
    </location>
</feature>
<feature type="sequence conflict" description="In Ref. 1; AAF80376." evidence="3" ref="1">
    <original>FDLELINHVKA</original>
    <variation>SILTDQPPSKR</variation>
    <location>
        <begin position="479"/>
        <end position="489"/>
    </location>
</feature>
<reference key="1">
    <citation type="journal article" date="2001" name="Fungal Genet. Biol.">
        <title>Regulation of hisHF transcription of Aspergillus nidulans by adenine and amino acid limitation.</title>
        <authorList>
            <person name="Valerius O."/>
            <person name="Draht O."/>
            <person name="Kuebler E."/>
            <person name="Adler K."/>
            <person name="Hoffmann B."/>
            <person name="Braus G.H."/>
        </authorList>
    </citation>
    <scope>NUCLEOTIDE SEQUENCE [GENOMIC DNA]</scope>
    <source>
        <strain>A234</strain>
    </source>
</reference>
<reference key="2">
    <citation type="journal article" date="2005" name="Nature">
        <title>Sequencing of Aspergillus nidulans and comparative analysis with A. fumigatus and A. oryzae.</title>
        <authorList>
            <person name="Galagan J.E."/>
            <person name="Calvo S.E."/>
            <person name="Cuomo C."/>
            <person name="Ma L.-J."/>
            <person name="Wortman J.R."/>
            <person name="Batzoglou S."/>
            <person name="Lee S.-I."/>
            <person name="Bastuerkmen M."/>
            <person name="Spevak C.C."/>
            <person name="Clutterbuck J."/>
            <person name="Kapitonov V."/>
            <person name="Jurka J."/>
            <person name="Scazzocchio C."/>
            <person name="Farman M.L."/>
            <person name="Butler J."/>
            <person name="Purcell S."/>
            <person name="Harris S."/>
            <person name="Braus G.H."/>
            <person name="Draht O."/>
            <person name="Busch S."/>
            <person name="D'Enfert C."/>
            <person name="Bouchier C."/>
            <person name="Goldman G.H."/>
            <person name="Bell-Pedersen D."/>
            <person name="Griffiths-Jones S."/>
            <person name="Doonan J.H."/>
            <person name="Yu J."/>
            <person name="Vienken K."/>
            <person name="Pain A."/>
            <person name="Freitag M."/>
            <person name="Selker E.U."/>
            <person name="Archer D.B."/>
            <person name="Penalva M.A."/>
            <person name="Oakley B.R."/>
            <person name="Momany M."/>
            <person name="Tanaka T."/>
            <person name="Kumagai T."/>
            <person name="Asai K."/>
            <person name="Machida M."/>
            <person name="Nierman W.C."/>
            <person name="Denning D.W."/>
            <person name="Caddick M.X."/>
            <person name="Hynes M."/>
            <person name="Paoletti M."/>
            <person name="Fischer R."/>
            <person name="Miller B.L."/>
            <person name="Dyer P.S."/>
            <person name="Sachs M.S."/>
            <person name="Osmani S.A."/>
            <person name="Birren B.W."/>
        </authorList>
    </citation>
    <scope>NUCLEOTIDE SEQUENCE [LARGE SCALE GENOMIC DNA]</scope>
    <source>
        <strain>FGSC A4 / ATCC 38163 / CBS 112.46 / NRRL 194 / M139</strain>
    </source>
</reference>
<reference key="3">
    <citation type="journal article" date="2009" name="Fungal Genet. Biol.">
        <title>The 2008 update of the Aspergillus nidulans genome annotation: a community effort.</title>
        <authorList>
            <person name="Wortman J.R."/>
            <person name="Gilsenan J.M."/>
            <person name="Joardar V."/>
            <person name="Deegan J."/>
            <person name="Clutterbuck J."/>
            <person name="Andersen M.R."/>
            <person name="Archer D."/>
            <person name="Bencina M."/>
            <person name="Braus G."/>
            <person name="Coutinho P."/>
            <person name="von Dohren H."/>
            <person name="Doonan J."/>
            <person name="Driessen A.J."/>
            <person name="Durek P."/>
            <person name="Espeso E."/>
            <person name="Fekete E."/>
            <person name="Flipphi M."/>
            <person name="Estrada C.G."/>
            <person name="Geysens S."/>
            <person name="Goldman G."/>
            <person name="de Groot P.W."/>
            <person name="Hansen K."/>
            <person name="Harris S.D."/>
            <person name="Heinekamp T."/>
            <person name="Helmstaedt K."/>
            <person name="Henrissat B."/>
            <person name="Hofmann G."/>
            <person name="Homan T."/>
            <person name="Horio T."/>
            <person name="Horiuchi H."/>
            <person name="James S."/>
            <person name="Jones M."/>
            <person name="Karaffa L."/>
            <person name="Karanyi Z."/>
            <person name="Kato M."/>
            <person name="Keller N."/>
            <person name="Kelly D.E."/>
            <person name="Kiel J.A."/>
            <person name="Kim J.M."/>
            <person name="van der Klei I.J."/>
            <person name="Klis F.M."/>
            <person name="Kovalchuk A."/>
            <person name="Krasevec N."/>
            <person name="Kubicek C.P."/>
            <person name="Liu B."/>
            <person name="Maccabe A."/>
            <person name="Meyer V."/>
            <person name="Mirabito P."/>
            <person name="Miskei M."/>
            <person name="Mos M."/>
            <person name="Mullins J."/>
            <person name="Nelson D.R."/>
            <person name="Nielsen J."/>
            <person name="Oakley B.R."/>
            <person name="Osmani S.A."/>
            <person name="Pakula T."/>
            <person name="Paszewski A."/>
            <person name="Paulsen I."/>
            <person name="Pilsyk S."/>
            <person name="Pocsi I."/>
            <person name="Punt P.J."/>
            <person name="Ram A.F."/>
            <person name="Ren Q."/>
            <person name="Robellet X."/>
            <person name="Robson G."/>
            <person name="Seiboth B."/>
            <person name="van Solingen P."/>
            <person name="Specht T."/>
            <person name="Sun J."/>
            <person name="Taheri-Talesh N."/>
            <person name="Takeshita N."/>
            <person name="Ussery D."/>
            <person name="vanKuyk P.A."/>
            <person name="Visser H."/>
            <person name="van de Vondervoort P.J."/>
            <person name="de Vries R.P."/>
            <person name="Walton J."/>
            <person name="Xiang X."/>
            <person name="Xiong Y."/>
            <person name="Zeng A.P."/>
            <person name="Brandt B.W."/>
            <person name="Cornell M.J."/>
            <person name="van den Hondel C.A."/>
            <person name="Visser J."/>
            <person name="Oliver S.G."/>
            <person name="Turner G."/>
        </authorList>
    </citation>
    <scope>GENOME REANNOTATION</scope>
    <source>
        <strain>FGSC A4 / ATCC 38163 / CBS 112.46 / NRRL 194 / M139</strain>
    </source>
</reference>
<gene>
    <name type="primary">hisHF</name>
    <name type="ORF">AN7430</name>
</gene>
<organism>
    <name type="scientific">Emericella nidulans (strain FGSC A4 / ATCC 38163 / CBS 112.46 / NRRL 194 / M139)</name>
    <name type="common">Aspergillus nidulans</name>
    <dbReference type="NCBI Taxonomy" id="227321"/>
    <lineage>
        <taxon>Eukaryota</taxon>
        <taxon>Fungi</taxon>
        <taxon>Dikarya</taxon>
        <taxon>Ascomycota</taxon>
        <taxon>Pezizomycotina</taxon>
        <taxon>Eurotiomycetes</taxon>
        <taxon>Eurotiomycetidae</taxon>
        <taxon>Eurotiales</taxon>
        <taxon>Aspergillaceae</taxon>
        <taxon>Aspergillus</taxon>
        <taxon>Aspergillus subgen. Nidulantes</taxon>
    </lineage>
</organism>